<sequence>MSQRYLRMDLSIALGALPQWQAHPTRQALQKRYRFDHFNAAFGFMSRVAMFAEKIDHHPEWSNVYNRVDVVLTTHDAGGVTELDVRMAQFMDEAAAQAGATGLSLPVY</sequence>
<keyword id="KW-0456">Lyase</keyword>
<keyword id="KW-1185">Reference proteome</keyword>
<gene>
    <name type="ordered locus">BAV0690</name>
</gene>
<feature type="chain" id="PRO_1000050406" description="Putative pterin-4-alpha-carbinolamine dehydratase">
    <location>
        <begin position="1"/>
        <end position="108"/>
    </location>
</feature>
<reference key="1">
    <citation type="journal article" date="2006" name="J. Bacteriol.">
        <title>Comparison of the genome sequence of the poultry pathogen Bordetella avium with those of B. bronchiseptica, B. pertussis, and B. parapertussis reveals extensive diversity in surface structures associated with host interaction.</title>
        <authorList>
            <person name="Sebaihia M."/>
            <person name="Preston A."/>
            <person name="Maskell D.J."/>
            <person name="Kuzmiak H."/>
            <person name="Connell T.D."/>
            <person name="King N.D."/>
            <person name="Orndorff P.E."/>
            <person name="Miyamoto D.M."/>
            <person name="Thomson N.R."/>
            <person name="Harris D."/>
            <person name="Goble A."/>
            <person name="Lord A."/>
            <person name="Murphy L."/>
            <person name="Quail M.A."/>
            <person name="Rutter S."/>
            <person name="Squares R."/>
            <person name="Squares S."/>
            <person name="Woodward J."/>
            <person name="Parkhill J."/>
            <person name="Temple L.M."/>
        </authorList>
    </citation>
    <scope>NUCLEOTIDE SEQUENCE [LARGE SCALE GENOMIC DNA]</scope>
    <source>
        <strain>197N</strain>
    </source>
</reference>
<evidence type="ECO:0000255" key="1">
    <source>
        <dbReference type="HAMAP-Rule" id="MF_00434"/>
    </source>
</evidence>
<protein>
    <recommendedName>
        <fullName evidence="1">Putative pterin-4-alpha-carbinolamine dehydratase</fullName>
        <shortName evidence="1">PHS</shortName>
        <ecNumber evidence="1">4.2.1.96</ecNumber>
    </recommendedName>
    <alternativeName>
        <fullName evidence="1">4-alpha-hydroxy-tetrahydropterin dehydratase</fullName>
    </alternativeName>
    <alternativeName>
        <fullName evidence="1">Pterin carbinolamine dehydratase</fullName>
        <shortName evidence="1">PCD</shortName>
    </alternativeName>
</protein>
<comment type="catalytic activity">
    <reaction evidence="1">
        <text>(4aS,6R)-4a-hydroxy-L-erythro-5,6,7,8-tetrahydrobiopterin = (6R)-L-erythro-6,7-dihydrobiopterin + H2O</text>
        <dbReference type="Rhea" id="RHEA:11920"/>
        <dbReference type="ChEBI" id="CHEBI:15377"/>
        <dbReference type="ChEBI" id="CHEBI:15642"/>
        <dbReference type="ChEBI" id="CHEBI:43120"/>
        <dbReference type="EC" id="4.2.1.96"/>
    </reaction>
</comment>
<comment type="similarity">
    <text evidence="1">Belongs to the pterin-4-alpha-carbinolamine dehydratase family.</text>
</comment>
<accession>Q2KXB6</accession>
<organism>
    <name type="scientific">Bordetella avium (strain 197N)</name>
    <dbReference type="NCBI Taxonomy" id="360910"/>
    <lineage>
        <taxon>Bacteria</taxon>
        <taxon>Pseudomonadati</taxon>
        <taxon>Pseudomonadota</taxon>
        <taxon>Betaproteobacteria</taxon>
        <taxon>Burkholderiales</taxon>
        <taxon>Alcaligenaceae</taxon>
        <taxon>Bordetella</taxon>
    </lineage>
</organism>
<dbReference type="EC" id="4.2.1.96" evidence="1"/>
<dbReference type="EMBL" id="AM167904">
    <property type="protein sequence ID" value="CAJ48296.1"/>
    <property type="molecule type" value="Genomic_DNA"/>
</dbReference>
<dbReference type="RefSeq" id="WP_012416386.1">
    <property type="nucleotide sequence ID" value="NC_010645.1"/>
</dbReference>
<dbReference type="SMR" id="Q2KXB6"/>
<dbReference type="STRING" id="360910.BAV0690"/>
<dbReference type="GeneID" id="92936128"/>
<dbReference type="KEGG" id="bav:BAV0690"/>
<dbReference type="eggNOG" id="COG2154">
    <property type="taxonomic scope" value="Bacteria"/>
</dbReference>
<dbReference type="HOGENOM" id="CLU_081974_3_2_4"/>
<dbReference type="OrthoDB" id="9794987at2"/>
<dbReference type="Proteomes" id="UP000001977">
    <property type="component" value="Chromosome"/>
</dbReference>
<dbReference type="GO" id="GO:0008124">
    <property type="term" value="F:4-alpha-hydroxytetrahydrobiopterin dehydratase activity"/>
    <property type="evidence" value="ECO:0007669"/>
    <property type="project" value="UniProtKB-UniRule"/>
</dbReference>
<dbReference type="GO" id="GO:0006729">
    <property type="term" value="P:tetrahydrobiopterin biosynthetic process"/>
    <property type="evidence" value="ECO:0007669"/>
    <property type="project" value="InterPro"/>
</dbReference>
<dbReference type="CDD" id="cd00914">
    <property type="entry name" value="PCD_DCoH_subfamily_b"/>
    <property type="match status" value="1"/>
</dbReference>
<dbReference type="Gene3D" id="3.30.1360.20">
    <property type="entry name" value="Transcriptional coactivator/pterin dehydratase"/>
    <property type="match status" value="1"/>
</dbReference>
<dbReference type="HAMAP" id="MF_00434">
    <property type="entry name" value="Pterin_4_alpha"/>
    <property type="match status" value="1"/>
</dbReference>
<dbReference type="InterPro" id="IPR036428">
    <property type="entry name" value="PCD_sf"/>
</dbReference>
<dbReference type="InterPro" id="IPR001533">
    <property type="entry name" value="Pterin_deHydtase"/>
</dbReference>
<dbReference type="NCBIfam" id="NF002018">
    <property type="entry name" value="PRK00823.1-3"/>
    <property type="match status" value="1"/>
</dbReference>
<dbReference type="NCBIfam" id="NF002020">
    <property type="entry name" value="PRK00823.1-5"/>
    <property type="match status" value="1"/>
</dbReference>
<dbReference type="PANTHER" id="PTHR12599">
    <property type="entry name" value="PTERIN-4-ALPHA-CARBINOLAMINE DEHYDRATASE"/>
    <property type="match status" value="1"/>
</dbReference>
<dbReference type="PANTHER" id="PTHR12599:SF0">
    <property type="entry name" value="PTERIN-4-ALPHA-CARBINOLAMINE DEHYDRATASE"/>
    <property type="match status" value="1"/>
</dbReference>
<dbReference type="Pfam" id="PF01329">
    <property type="entry name" value="Pterin_4a"/>
    <property type="match status" value="1"/>
</dbReference>
<dbReference type="SUPFAM" id="SSF55248">
    <property type="entry name" value="PCD-like"/>
    <property type="match status" value="1"/>
</dbReference>
<name>PHS_BORA1</name>
<proteinExistence type="inferred from homology"/>